<keyword id="KW-0489">Methyltransferase</keyword>
<keyword id="KW-0496">Mitochondrion</keyword>
<keyword id="KW-0597">Phosphoprotein</keyword>
<keyword id="KW-1185">Reference proteome</keyword>
<keyword id="KW-0690">Ribosome biogenesis</keyword>
<keyword id="KW-0694">RNA-binding</keyword>
<keyword id="KW-0698">rRNA processing</keyword>
<keyword id="KW-0699">rRNA-binding</keyword>
<keyword id="KW-0949">S-adenosyl-L-methionine</keyword>
<keyword id="KW-0808">Transferase</keyword>
<keyword id="KW-0809">Transit peptide</keyword>
<protein>
    <recommendedName>
        <fullName>5-cytosine rRNA methyltransferase NSUN4</fullName>
        <ecNumber evidence="1">2.1.1.-</ecNumber>
    </recommendedName>
    <alternativeName>
        <fullName evidence="4">5-cytosine tRNA methyltransferase NSUN4</fullName>
        <ecNumber evidence="1">2.1.1.-</ecNumber>
    </alternativeName>
    <alternativeName>
        <fullName>NOL1/NOP2/Sun domain family member 4</fullName>
    </alternativeName>
</protein>
<accession>Q0V8R7</accession>
<organism>
    <name type="scientific">Bos taurus</name>
    <name type="common">Bovine</name>
    <dbReference type="NCBI Taxonomy" id="9913"/>
    <lineage>
        <taxon>Eukaryota</taxon>
        <taxon>Metazoa</taxon>
        <taxon>Chordata</taxon>
        <taxon>Craniata</taxon>
        <taxon>Vertebrata</taxon>
        <taxon>Euteleostomi</taxon>
        <taxon>Mammalia</taxon>
        <taxon>Eutheria</taxon>
        <taxon>Laurasiatheria</taxon>
        <taxon>Artiodactyla</taxon>
        <taxon>Ruminantia</taxon>
        <taxon>Pecora</taxon>
        <taxon>Bovidae</taxon>
        <taxon>Bovinae</taxon>
        <taxon>Bos</taxon>
    </lineage>
</organism>
<feature type="transit peptide" description="Mitochondrion" evidence="2">
    <location>
        <begin position="1"/>
        <end position="25"/>
    </location>
</feature>
<feature type="chain" id="PRO_0000289233" description="5-cytosine rRNA methyltransferase NSUN4">
    <location>
        <begin position="26"/>
        <end position="384"/>
    </location>
</feature>
<feature type="active site" description="Nucleophile" evidence="3">
    <location>
        <position position="310"/>
    </location>
</feature>
<feature type="binding site" evidence="2">
    <location>
        <position position="185"/>
    </location>
    <ligand>
        <name>S-adenosyl-L-methionine</name>
        <dbReference type="ChEBI" id="CHEBI:59789"/>
    </ligand>
</feature>
<feature type="binding site" evidence="2">
    <location>
        <position position="186"/>
    </location>
    <ligand>
        <name>S-adenosyl-L-methionine</name>
        <dbReference type="ChEBI" id="CHEBI:59789"/>
    </ligand>
</feature>
<feature type="binding site" evidence="2">
    <location>
        <position position="187"/>
    </location>
    <ligand>
        <name>S-adenosyl-L-methionine</name>
        <dbReference type="ChEBI" id="CHEBI:59789"/>
    </ligand>
</feature>
<feature type="binding site" evidence="2">
    <location>
        <position position="204"/>
    </location>
    <ligand>
        <name>S-adenosyl-L-methionine</name>
        <dbReference type="ChEBI" id="CHEBI:59789"/>
    </ligand>
</feature>
<feature type="binding site" evidence="2">
    <location>
        <position position="209"/>
    </location>
    <ligand>
        <name>S-adenosyl-L-methionine</name>
        <dbReference type="ChEBI" id="CHEBI:59789"/>
    </ligand>
</feature>
<feature type="binding site" evidence="2 3">
    <location>
        <position position="237"/>
    </location>
    <ligand>
        <name>S-adenosyl-L-methionine</name>
        <dbReference type="ChEBI" id="CHEBI:59789"/>
    </ligand>
</feature>
<feature type="binding site" evidence="2">
    <location>
        <position position="238"/>
    </location>
    <ligand>
        <name>S-adenosyl-L-methionine</name>
        <dbReference type="ChEBI" id="CHEBI:59789"/>
    </ligand>
</feature>
<feature type="binding site" evidence="3">
    <location>
        <position position="255"/>
    </location>
    <ligand>
        <name>S-adenosyl-L-methionine</name>
        <dbReference type="ChEBI" id="CHEBI:59789"/>
    </ligand>
</feature>
<feature type="modified residue" description="Phosphoserine" evidence="2">
    <location>
        <position position="206"/>
    </location>
</feature>
<feature type="sequence conflict" description="In Ref. 1; DY454541." evidence="4" ref="1">
    <original>ML</original>
    <variation>IP</variation>
    <location>
        <begin position="12"/>
        <end position="13"/>
    </location>
</feature>
<feature type="sequence conflict" description="In Ref. 1; DY454541." evidence="4" ref="1">
    <original>L</original>
    <variation>P</variation>
    <location>
        <position position="43"/>
    </location>
</feature>
<feature type="sequence conflict" description="In Ref. 1; DY454541." evidence="4" ref="1">
    <original>L</original>
    <variation>P</variation>
    <location>
        <position position="167"/>
    </location>
</feature>
<evidence type="ECO:0000250" key="1">
    <source>
        <dbReference type="UniProtKB" id="Q95XR2"/>
    </source>
</evidence>
<evidence type="ECO:0000250" key="2">
    <source>
        <dbReference type="UniProtKB" id="Q96CB9"/>
    </source>
</evidence>
<evidence type="ECO:0000255" key="3">
    <source>
        <dbReference type="PROSITE-ProRule" id="PRU01023"/>
    </source>
</evidence>
<evidence type="ECO:0000305" key="4"/>
<comment type="function">
    <text evidence="2">Mitochondrial RNA cytosine C(5)-methyltransferase that methylates cytosine to 5-methylcytosine (m5C) in various RNAs, such as rRNAs, mRNAs and some long non-coding RNAs (lncRNAs) (By similarity). Involved in mitochondrial ribosome small subunit (SSU) maturation by catalyzing methylation of mitochondrial 12S rRNA; the function is independent of MTERFD2/MTERF4 and assembled mitochondrial ribosome large subunit (LSU) (By similarity). Targeted to LSU by MTERFD2/MTERF4 and probably is involved in a final step in ribosome biogenesis to ensure that SSU and LSU are assembled (By similarity). In vitro can methylate 16S rRNA of the LSU; the methylation is enhanced by MTERFD/MTERF4 (By similarity). Also acts as a regulator of innate immunity by marking double-stranded mitochondrial RNAs(mt-dsRNAs) generated in response to stress: catalyzes m5C modification on mitochondrial RNAs, such as a mRNAs and lncRNAs, with a preference for the termini of light-strand lncRNAs, promoting their degradation and cytosolic release (By similarity). Modified light-strand lncRNAs are then recognized by C1QBP reader and recruited to the mitochondrial degradosome complex, which promotes their degradation (By similarity).</text>
</comment>
<comment type="catalytic activity">
    <reaction evidence="2">
        <text>a cytidine in rRNA + S-adenosyl-L-methionine = a 5-methylcytidine in rRNA + S-adenosyl-L-homocysteine + H(+)</text>
        <dbReference type="Rhea" id="RHEA:61484"/>
        <dbReference type="Rhea" id="RHEA-COMP:15836"/>
        <dbReference type="Rhea" id="RHEA-COMP:15837"/>
        <dbReference type="ChEBI" id="CHEBI:15378"/>
        <dbReference type="ChEBI" id="CHEBI:57856"/>
        <dbReference type="ChEBI" id="CHEBI:59789"/>
        <dbReference type="ChEBI" id="CHEBI:74483"/>
        <dbReference type="ChEBI" id="CHEBI:82748"/>
    </reaction>
</comment>
<comment type="catalytic activity">
    <reaction evidence="2">
        <text>a cytidine in mRNA + S-adenosyl-L-methionine = a 5-methylcytidine in mRNA + S-adenosyl-L-homocysteine + H(+)</text>
        <dbReference type="Rhea" id="RHEA:61464"/>
        <dbReference type="Rhea" id="RHEA-COMP:15145"/>
        <dbReference type="Rhea" id="RHEA-COMP:15826"/>
        <dbReference type="ChEBI" id="CHEBI:15378"/>
        <dbReference type="ChEBI" id="CHEBI:57856"/>
        <dbReference type="ChEBI" id="CHEBI:59789"/>
        <dbReference type="ChEBI" id="CHEBI:74483"/>
        <dbReference type="ChEBI" id="CHEBI:82748"/>
    </reaction>
</comment>
<comment type="subunit">
    <text evidence="2">Heterodimer with MTERFD2/MTERF4; this interaction seems to be required for NSUN4 recruitment to the mitochondrial large ribosomal subunit.</text>
</comment>
<comment type="subcellular location">
    <subcellularLocation>
        <location evidence="2">Mitochondrion</location>
    </subcellularLocation>
</comment>
<comment type="similarity">
    <text evidence="3">Belongs to the class I-like SAM-binding methyltransferase superfamily. RsmB/NOP family.</text>
</comment>
<reference key="1">
    <citation type="journal article" date="2005" name="BMC Genomics">
        <title>Characterization of 954 bovine full-CDS cDNA sequences.</title>
        <authorList>
            <person name="Harhay G.P."/>
            <person name="Sonstegard T.S."/>
            <person name="Keele J.W."/>
            <person name="Heaton M.P."/>
            <person name="Clawson M.L."/>
            <person name="Snelling W.M."/>
            <person name="Wiedmann R.T."/>
            <person name="Van Tassell C.P."/>
            <person name="Smith T.P.L."/>
        </authorList>
    </citation>
    <scope>NUCLEOTIDE SEQUENCE [LARGE SCALE MRNA]</scope>
</reference>
<sequence>MAALVVRGVRDMLKRADFATVPRRQRHKKKWASTEPKFPATRLALQNFDMTYSVQFGDLWPSIRVSLLSEQKYGALVNNFAAGDRVSAELEQLKARDFVNEAVFHREPEPENSQTAAPSPASWACSPNLRCFTFTRGDVSRFPPARLGSLGLMDYYLMDAASLLPVLALGLQPGDTVLDLCAAPGGKTLALLQTGCCRNLAANDLSTSRTSRLQRVLHSYVPQDVRDKNRVRVTSWDGRKWGELEGDTYDRVLVDVPCTTDRHSLHEEENSIFQRSRKKERQMLPVLQVQLLAAGLLATKPGGHIVYSTCSLSHLQNEYVVQGAIELLDNQYSIKVQVEDLTHFRKLFMNTFSFFPSCQVGELVIPNLMANFGPMYFCKMCRMT</sequence>
<dbReference type="EC" id="2.1.1.-" evidence="1"/>
<dbReference type="EMBL" id="BT026151">
    <property type="protein sequence ID" value="ABG66990.1"/>
    <property type="molecule type" value="mRNA"/>
</dbReference>
<dbReference type="EMBL" id="DY454541">
    <property type="status" value="NOT_ANNOTATED_CDS"/>
    <property type="molecule type" value="mRNA"/>
</dbReference>
<dbReference type="RefSeq" id="NP_001178310.1">
    <property type="nucleotide sequence ID" value="NM_001191381.1"/>
</dbReference>
<dbReference type="SMR" id="Q0V8R7"/>
<dbReference type="FunCoup" id="Q0V8R7">
    <property type="interactions" value="1622"/>
</dbReference>
<dbReference type="STRING" id="9913.ENSBTAP00000021120"/>
<dbReference type="PaxDb" id="9913-ENSBTAP00000021120"/>
<dbReference type="GeneID" id="618779"/>
<dbReference type="KEGG" id="bta:618779"/>
<dbReference type="CTD" id="387338"/>
<dbReference type="VEuPathDB" id="HostDB:ENSBTAG00000015891"/>
<dbReference type="eggNOG" id="KOG2198">
    <property type="taxonomic scope" value="Eukaryota"/>
</dbReference>
<dbReference type="HOGENOM" id="CLU_041061_2_0_1"/>
<dbReference type="InParanoid" id="Q0V8R7"/>
<dbReference type="OMA" id="MVNNFGD"/>
<dbReference type="OrthoDB" id="8020218at2759"/>
<dbReference type="TreeFam" id="TF321304"/>
<dbReference type="Proteomes" id="UP000009136">
    <property type="component" value="Chromosome 3"/>
</dbReference>
<dbReference type="Bgee" id="ENSBTAG00000015891">
    <property type="expression patterns" value="Expressed in semen and 105 other cell types or tissues"/>
</dbReference>
<dbReference type="GO" id="GO:0005762">
    <property type="term" value="C:mitochondrial large ribosomal subunit"/>
    <property type="evidence" value="ECO:0000318"/>
    <property type="project" value="GO_Central"/>
</dbReference>
<dbReference type="GO" id="GO:0005759">
    <property type="term" value="C:mitochondrial matrix"/>
    <property type="evidence" value="ECO:0000250"/>
    <property type="project" value="UniProtKB"/>
</dbReference>
<dbReference type="GO" id="GO:0008168">
    <property type="term" value="F:methyltransferase activity"/>
    <property type="evidence" value="ECO:0000318"/>
    <property type="project" value="GO_Central"/>
</dbReference>
<dbReference type="GO" id="GO:0062152">
    <property type="term" value="F:mRNA (cytidine-5-)-methyltransferase activity"/>
    <property type="evidence" value="ECO:0000250"/>
    <property type="project" value="UniProtKB"/>
</dbReference>
<dbReference type="GO" id="GO:0019843">
    <property type="term" value="F:rRNA binding"/>
    <property type="evidence" value="ECO:0007669"/>
    <property type="project" value="UniProtKB-KW"/>
</dbReference>
<dbReference type="GO" id="GO:0000957">
    <property type="term" value="P:mitochondrial RNA catabolic process"/>
    <property type="evidence" value="ECO:0000250"/>
    <property type="project" value="UniProtKB"/>
</dbReference>
<dbReference type="GO" id="GO:0031167">
    <property type="term" value="P:rRNA methylation"/>
    <property type="evidence" value="ECO:0000318"/>
    <property type="project" value="GO_Central"/>
</dbReference>
<dbReference type="CDD" id="cd02440">
    <property type="entry name" value="AdoMet_MTases"/>
    <property type="match status" value="1"/>
</dbReference>
<dbReference type="FunFam" id="3.40.50.150:FF:000055">
    <property type="entry name" value="5-methylcytosine rRNA methyltransferase NSUN4"/>
    <property type="match status" value="1"/>
</dbReference>
<dbReference type="Gene3D" id="6.20.240.40">
    <property type="match status" value="1"/>
</dbReference>
<dbReference type="Gene3D" id="3.40.50.150">
    <property type="entry name" value="Vaccinia Virus protein VP39"/>
    <property type="match status" value="1"/>
</dbReference>
<dbReference type="InterPro" id="IPR049560">
    <property type="entry name" value="MeTrfase_RsmB-F_NOP2_cat"/>
</dbReference>
<dbReference type="InterPro" id="IPR001678">
    <property type="entry name" value="MeTrfase_RsmB-F_NOP2_dom"/>
</dbReference>
<dbReference type="InterPro" id="IPR023267">
    <property type="entry name" value="RCMT"/>
</dbReference>
<dbReference type="InterPro" id="IPR029063">
    <property type="entry name" value="SAM-dependent_MTases_sf"/>
</dbReference>
<dbReference type="PANTHER" id="PTHR22808:SF3">
    <property type="entry name" value="5-METHYLCYTOSINE RRNA METHYLTRANSFERASE NSUN4"/>
    <property type="match status" value="1"/>
</dbReference>
<dbReference type="PANTHER" id="PTHR22808">
    <property type="entry name" value="NCL1 YEAST -RELATED NOL1/NOP2/FMU SUN DOMAIN-CONTAINING"/>
    <property type="match status" value="1"/>
</dbReference>
<dbReference type="Pfam" id="PF01189">
    <property type="entry name" value="Methyltr_RsmB-F"/>
    <property type="match status" value="1"/>
</dbReference>
<dbReference type="PRINTS" id="PR02008">
    <property type="entry name" value="RCMTFAMILY"/>
</dbReference>
<dbReference type="SUPFAM" id="SSF53335">
    <property type="entry name" value="S-adenosyl-L-methionine-dependent methyltransferases"/>
    <property type="match status" value="1"/>
</dbReference>
<dbReference type="PROSITE" id="PS51686">
    <property type="entry name" value="SAM_MT_RSMB_NOP"/>
    <property type="match status" value="1"/>
</dbReference>
<proteinExistence type="evidence at transcript level"/>
<name>NSUN4_BOVIN</name>
<gene>
    <name type="primary">NSUN4</name>
</gene>